<dbReference type="EC" id="2.7.8.33" evidence="1"/>
<dbReference type="EMBL" id="AF233324">
    <property type="protein sequence ID" value="AAF33469.1"/>
    <property type="molecule type" value="Genomic_DNA"/>
</dbReference>
<dbReference type="EMBL" id="AE006468">
    <property type="protein sequence ID" value="AAL22767.1"/>
    <property type="molecule type" value="Genomic_DNA"/>
</dbReference>
<dbReference type="EMBL" id="AJ002275">
    <property type="protein sequence ID" value="CAA05287.1"/>
    <property type="molecule type" value="Genomic_DNA"/>
</dbReference>
<dbReference type="RefSeq" id="NP_462808.1">
    <property type="nucleotide sequence ID" value="NC_003197.2"/>
</dbReference>
<dbReference type="RefSeq" id="WP_000771937.1">
    <property type="nucleotide sequence ID" value="NC_003197.2"/>
</dbReference>
<dbReference type="SMR" id="Q9L6R7"/>
<dbReference type="STRING" id="99287.STM3918"/>
<dbReference type="PaxDb" id="99287-STM3918"/>
<dbReference type="GeneID" id="1255444"/>
<dbReference type="KEGG" id="stm:STM3918"/>
<dbReference type="PATRIC" id="fig|99287.12.peg.4139"/>
<dbReference type="HOGENOM" id="CLU_023982_1_0_6"/>
<dbReference type="OMA" id="MCLGFLP"/>
<dbReference type="PhylomeDB" id="Q9L6R7"/>
<dbReference type="BioCyc" id="SENT99287:STM3918-MONOMER"/>
<dbReference type="UniPathway" id="UPA00281"/>
<dbReference type="UniPathway" id="UPA00566"/>
<dbReference type="Proteomes" id="UP000001014">
    <property type="component" value="Chromosome"/>
</dbReference>
<dbReference type="GO" id="GO:0009276">
    <property type="term" value="C:Gram-negative-bacterium-type cell wall"/>
    <property type="evidence" value="ECO:0000250"/>
    <property type="project" value="UniProtKB"/>
</dbReference>
<dbReference type="GO" id="GO:0005886">
    <property type="term" value="C:plasma membrane"/>
    <property type="evidence" value="ECO:0000318"/>
    <property type="project" value="GO_Central"/>
</dbReference>
<dbReference type="GO" id="GO:0016757">
    <property type="term" value="F:glycosyltransferase activity"/>
    <property type="evidence" value="ECO:0007669"/>
    <property type="project" value="UniProtKB-KW"/>
</dbReference>
<dbReference type="GO" id="GO:0000287">
    <property type="term" value="F:magnesium ion binding"/>
    <property type="evidence" value="ECO:0000250"/>
    <property type="project" value="UniProtKB"/>
</dbReference>
<dbReference type="GO" id="GO:0030145">
    <property type="term" value="F:manganese ion binding"/>
    <property type="evidence" value="ECO:0000250"/>
    <property type="project" value="UniProtKB"/>
</dbReference>
<dbReference type="GO" id="GO:0016780">
    <property type="term" value="F:phosphotransferase activity, for other substituted phosphate groups"/>
    <property type="evidence" value="ECO:0000250"/>
    <property type="project" value="UniProtKB"/>
</dbReference>
<dbReference type="GO" id="GO:0036380">
    <property type="term" value="F:UDP-N-acetylglucosamine-undecaprenyl-phosphate N-acetylglucosaminephosphotransferase activity"/>
    <property type="evidence" value="ECO:0007669"/>
    <property type="project" value="UniProtKB-UniRule"/>
</dbReference>
<dbReference type="GO" id="GO:0044038">
    <property type="term" value="P:cell wall macromolecule biosynthetic process"/>
    <property type="evidence" value="ECO:0000250"/>
    <property type="project" value="UniProtKB"/>
</dbReference>
<dbReference type="GO" id="GO:0071555">
    <property type="term" value="P:cell wall organization"/>
    <property type="evidence" value="ECO:0000250"/>
    <property type="project" value="UniProtKB"/>
</dbReference>
<dbReference type="GO" id="GO:0009246">
    <property type="term" value="P:enterobacterial common antigen biosynthetic process"/>
    <property type="evidence" value="ECO:0007669"/>
    <property type="project" value="UniProtKB-UniRule"/>
</dbReference>
<dbReference type="GO" id="GO:0009103">
    <property type="term" value="P:lipopolysaccharide biosynthetic process"/>
    <property type="evidence" value="ECO:0000250"/>
    <property type="project" value="UniProtKB"/>
</dbReference>
<dbReference type="GO" id="GO:0009243">
    <property type="term" value="P:O antigen biosynthetic process"/>
    <property type="evidence" value="ECO:0007669"/>
    <property type="project" value="UniProtKB-UniRule"/>
</dbReference>
<dbReference type="CDD" id="cd06853">
    <property type="entry name" value="GT_WecA_like"/>
    <property type="match status" value="1"/>
</dbReference>
<dbReference type="HAMAP" id="MF_02030">
    <property type="entry name" value="WecA_Gammaproteo"/>
    <property type="match status" value="1"/>
</dbReference>
<dbReference type="InterPro" id="IPR012750">
    <property type="entry name" value="ECA_WecA-rel"/>
</dbReference>
<dbReference type="InterPro" id="IPR000715">
    <property type="entry name" value="Glycosyl_transferase_4"/>
</dbReference>
<dbReference type="NCBIfam" id="TIGR02380">
    <property type="entry name" value="ECA_wecA"/>
    <property type="match status" value="1"/>
</dbReference>
<dbReference type="PANTHER" id="PTHR22926">
    <property type="entry name" value="PHOSPHO-N-ACETYLMURAMOYL-PENTAPEPTIDE-TRANSFERASE"/>
    <property type="match status" value="1"/>
</dbReference>
<dbReference type="PANTHER" id="PTHR22926:SF3">
    <property type="entry name" value="UNDECAPRENYL-PHOSPHATE ALPHA-N-ACETYLGLUCOSAMINYL 1-PHOSPHATE TRANSFERASE"/>
    <property type="match status" value="1"/>
</dbReference>
<dbReference type="Pfam" id="PF00953">
    <property type="entry name" value="Glycos_transf_4"/>
    <property type="match status" value="1"/>
</dbReference>
<gene>
    <name evidence="1" type="primary">wecA</name>
    <name type="synonym">rfe</name>
    <name type="ordered locus">STM3918</name>
    <name type="ORF">STMD1.72</name>
</gene>
<protein>
    <recommendedName>
        <fullName evidence="1">Undecaprenyl-phosphate alpha-N-acetylglucosaminyl 1-phosphate transferase</fullName>
        <ecNumber evidence="1">2.7.8.33</ecNumber>
    </recommendedName>
    <alternativeName>
        <fullName evidence="1">UDP-GlcNAc:undecaprenyl-phosphate GlcNAc-1-phosphate transferase</fullName>
    </alternativeName>
    <alternativeName>
        <fullName evidence="1">Undecaprenyl-phosphate GlcNAc-1-phosphate transferase</fullName>
    </alternativeName>
</protein>
<keyword id="KW-0997">Cell inner membrane</keyword>
<keyword id="KW-1003">Cell membrane</keyword>
<keyword id="KW-0328">Glycosyltransferase</keyword>
<keyword id="KW-0448">Lipopolysaccharide biosynthesis</keyword>
<keyword id="KW-0460">Magnesium</keyword>
<keyword id="KW-0464">Manganese</keyword>
<keyword id="KW-0472">Membrane</keyword>
<keyword id="KW-1185">Reference proteome</keyword>
<keyword id="KW-0808">Transferase</keyword>
<keyword id="KW-0812">Transmembrane</keyword>
<keyword id="KW-1133">Transmembrane helix</keyword>
<comment type="function">
    <text evidence="1">Catalyzes the transfer of the GlcNAc-1-phosphate moiety from UDP-GlcNAc onto the carrier lipid undecaprenyl phosphate (C55-P), yielding GlcNAc-pyrophosphoryl-undecaprenyl (GlcNAc-PP-C55).</text>
</comment>
<comment type="catalytic activity">
    <reaction evidence="1">
        <text>di-trans,octa-cis-undecaprenyl phosphate + UDP-N-acetyl-alpha-D-glucosamine = N-acetyl-alpha-D-glucosaminyl-di-trans,octa-cis-undecaprenyl diphosphate + UMP</text>
        <dbReference type="Rhea" id="RHEA:28090"/>
        <dbReference type="ChEBI" id="CHEBI:57705"/>
        <dbReference type="ChEBI" id="CHEBI:57865"/>
        <dbReference type="ChEBI" id="CHEBI:60392"/>
        <dbReference type="ChEBI" id="CHEBI:62959"/>
        <dbReference type="EC" id="2.7.8.33"/>
    </reaction>
</comment>
<comment type="cofactor">
    <cofactor evidence="1">
        <name>Mg(2+)</name>
        <dbReference type="ChEBI" id="CHEBI:18420"/>
    </cofactor>
</comment>
<comment type="cofactor">
    <cofactor evidence="1">
        <name>Mn(2+)</name>
        <dbReference type="ChEBI" id="CHEBI:29035"/>
    </cofactor>
</comment>
<comment type="activity regulation">
    <text>Inhibited by tunicamycin.</text>
</comment>
<comment type="pathway">
    <text evidence="1">Bacterial outer membrane biogenesis; LPS O-antigen biosynthesis.</text>
</comment>
<comment type="pathway">
    <text evidence="1">Bacterial outer membrane biogenesis; enterobacterial common antigen biosynthesis.</text>
</comment>
<comment type="subcellular location">
    <subcellularLocation>
        <location evidence="1">Cell inner membrane</location>
        <topology evidence="1">Multi-pass membrane protein</topology>
    </subcellularLocation>
</comment>
<comment type="similarity">
    <text evidence="1">Belongs to the glycosyltransferase 4 family. WecA subfamily.</text>
</comment>
<evidence type="ECO:0000255" key="1">
    <source>
        <dbReference type="HAMAP-Rule" id="MF_02030"/>
    </source>
</evidence>
<evidence type="ECO:0000305" key="2"/>
<sequence>MKLLTALSELISIFLFTTIFIFLARKVAIKIGLVDKPNFRKRHQGVIPLVGGISVFAGICFMFGLSDYYIPHLSLYLICAGVLVFVGAMDDRFDISVKIRAVVQAVIAVVMMVIAKLHLGSLGYIFGPWELVLGPFGYFLTLFAVWAAINAFNMVDGIDGLLGGLSSVSFAAMGLILWFDGQTSLAMWCFAMIAAILPYIMLNLGILGRRYKVFMGDAGSTLIGFTVIWLLLETTQGKTHSISPVTALWIIAIPLMDMVAIMYRRLRKGMSPFSPDRQHIHHLVMRAGFTSRQAFVLITLAAAILAGVGVTAEYSHFVPEWVMLVLFLLAFFLYGYCIKRAWKVARFIKRVKRRLRRQRENRPNLTK</sequence>
<organism>
    <name type="scientific">Salmonella typhimurium (strain LT2 / SGSC1412 / ATCC 700720)</name>
    <dbReference type="NCBI Taxonomy" id="99287"/>
    <lineage>
        <taxon>Bacteria</taxon>
        <taxon>Pseudomonadati</taxon>
        <taxon>Pseudomonadota</taxon>
        <taxon>Gammaproteobacteria</taxon>
        <taxon>Enterobacterales</taxon>
        <taxon>Enterobacteriaceae</taxon>
        <taxon>Salmonella</taxon>
    </lineage>
</organism>
<accession>Q9L6R7</accession>
<accession>O33788</accession>
<proteinExistence type="inferred from homology"/>
<reference key="1">
    <citation type="journal article" date="2001" name="Nature">
        <title>Complete genome sequence of Salmonella enterica serovar Typhimurium LT2.</title>
        <authorList>
            <person name="McClelland M."/>
            <person name="Sanderson K.E."/>
            <person name="Spieth J."/>
            <person name="Clifton S.W."/>
            <person name="Latreille P."/>
            <person name="Courtney L."/>
            <person name="Porwollik S."/>
            <person name="Ali J."/>
            <person name="Dante M."/>
            <person name="Du F."/>
            <person name="Hou S."/>
            <person name="Layman D."/>
            <person name="Leonard S."/>
            <person name="Nguyen C."/>
            <person name="Scott K."/>
            <person name="Holmes A."/>
            <person name="Grewal N."/>
            <person name="Mulvaney E."/>
            <person name="Ryan E."/>
            <person name="Sun H."/>
            <person name="Florea L."/>
            <person name="Miller W."/>
            <person name="Stoneking T."/>
            <person name="Nhan M."/>
            <person name="Waterston R."/>
            <person name="Wilson R.K."/>
        </authorList>
    </citation>
    <scope>NUCLEOTIDE SEQUENCE [LARGE SCALE GENOMIC DNA]</scope>
    <source>
        <strain>LT2 / SGSC1412 / ATCC 700720</strain>
    </source>
</reference>
<reference key="2">
    <citation type="journal article" date="1998" name="Mol. Gen. Genet.">
        <title>The sfiX, rfe and metN genes of Salmonella typhimurium and their involvement in the His(c) pleiotropic response.</title>
        <authorList>
            <person name="Mouslim C."/>
            <person name="Cano D.A."/>
            <person name="Casadesus J."/>
        </authorList>
    </citation>
    <scope>NUCLEOTIDE SEQUENCE [GENOMIC DNA] OF 111-367</scope>
    <source>
        <strain>LT2</strain>
    </source>
</reference>
<name>WECA_SALTY</name>
<feature type="chain" id="PRO_0000108945" description="Undecaprenyl-phosphate alpha-N-acetylglucosaminyl 1-phosphate transferase">
    <location>
        <begin position="1"/>
        <end position="367"/>
    </location>
</feature>
<feature type="transmembrane region" description="Helical" evidence="1">
    <location>
        <begin position="3"/>
        <end position="23"/>
    </location>
</feature>
<feature type="transmembrane region" description="Helical" evidence="1">
    <location>
        <begin position="45"/>
        <end position="65"/>
    </location>
</feature>
<feature type="transmembrane region" description="Helical" evidence="1">
    <location>
        <begin position="69"/>
        <end position="89"/>
    </location>
</feature>
<feature type="transmembrane region" description="Helical" evidence="1">
    <location>
        <begin position="129"/>
        <end position="149"/>
    </location>
</feature>
<feature type="transmembrane region" description="Helical" evidence="1">
    <location>
        <begin position="158"/>
        <end position="178"/>
    </location>
</feature>
<feature type="transmembrane region" description="Helical" evidence="1">
    <location>
        <begin position="187"/>
        <end position="207"/>
    </location>
</feature>
<feature type="transmembrane region" description="Helical" evidence="1">
    <location>
        <begin position="213"/>
        <end position="233"/>
    </location>
</feature>
<feature type="transmembrane region" description="Helical" evidence="1">
    <location>
        <begin position="242"/>
        <end position="262"/>
    </location>
</feature>
<feature type="transmembrane region" description="Helical" evidence="1">
    <location>
        <begin position="318"/>
        <end position="338"/>
    </location>
</feature>
<feature type="sequence conflict" description="In Ref. 2; CAA05287." evidence="2" ref="2">
    <original>HLG</original>
    <variation>ALS</variation>
    <location>
        <begin position="118"/>
        <end position="120"/>
    </location>
</feature>
<feature type="sequence conflict" description="In Ref. 2; CAA05287." evidence="2" ref="2">
    <original>PWELVLGPFGY</original>
    <variation>ALGVSAWPLWH</variation>
    <location>
        <begin position="128"/>
        <end position="138"/>
    </location>
</feature>
<feature type="sequence conflict" description="In Ref. 2; CAA05287." evidence="2" ref="2">
    <original>WAA</original>
    <variation>LNG</variation>
    <location>
        <begin position="146"/>
        <end position="148"/>
    </location>
</feature>
<feature type="sequence conflict" description="In Ref. 2; CAA05287." evidence="2" ref="2">
    <original>S</original>
    <variation>C</variation>
    <location>
        <position position="220"/>
    </location>
</feature>